<comment type="function">
    <text evidence="7 10 11 13">Acts as a transcriptional regulator in adaptive response to low oxygen tension. Acts as a regulator of hypoxia-inducible gene expression (PubMed:11734856, PubMed:21546903, PubMed:9840812). Plays a role in the development of the cardiorespiratory system (PubMed:18070924).</text>
</comment>
<comment type="function">
    <molecule>Isoform 1</molecule>
    <text evidence="13">Acts as a positive regulator of hypoxia-inducible gene expression. Associates to core DNA sequence 5'-TACGTG-3' within the hypoxia response element (HRE) of target gene promoters in a ARNT-dependent manner, and hence also participates in the transcriptional activation of reporter genes driven by HRE (PubMed:9840812).</text>
</comment>
<comment type="function">
    <molecule>Isoform 2</molecule>
    <text evidence="7 11">Attenuates the ability of transcription factor HIF1A, EPAS1 and the HIF1A-ARNT complex to bind to hypoxia-responsive elements (HRE) located within the enhancer/promoter of hypoxia-inducible target genes and hence inhibits HRE-driven transcriptional activation. Functions as an inhibitor of angiogenesis in hypoxic cells of the cornea. May act as a tumor suppressor (PubMed:11734856). May also be involved in apoptosis (PubMed:21546903).</text>
</comment>
<comment type="function">
    <molecule>Isoform 3</molecule>
    <text evidence="10">Attenuates the ability of transcription factor HIF1A, EPAS1 and the HIF1A-ARNT complex to bind to hypoxia-responsive elements (HRE) located within the enhancer/promoter of hypoxia-inducible target genes and hence inhibits HRE-driven transcriptional activation (PubMed:18070924). Also plays a role in the development of the lung and heart during embryonic and neonatal stages (PubMed:18070924).</text>
</comment>
<comment type="subunit">
    <text evidence="3 7 11 13">Isoform 1 interacts with ARNT (PubMed:9840812). Isoform 2 interacts with HIF1A (PubMed:11734856, PubMed:21546903). Isoform 2 interacts EPAS1 (PubMed:21546903). Isoform 2 interacts (via C-terminus domain) with BAD; the interaction reduces the binding between BAD and BAX (PubMed:21546903). Isoform 2 (via C-terminus domain) interacts with BCL2L2 and MCL1 (PubMed:21546903). Interacts with VHL (By similarity).</text>
</comment>
<comment type="subcellular location">
    <subcellularLocation>
        <location evidence="3">Nucleus</location>
    </subcellularLocation>
    <subcellularLocation>
        <location evidence="3">Cytoplasm</location>
    </subcellularLocation>
    <text evidence="2 3">In the nuclei of all periportal and perivenous hepatocytes. In the distal perivenous zone, detected in the cytoplasm of the hepatocytes. Localized in the cytoplasm and nuclei under normoxia, but increased in the nucleus under hypoxic conditions. Colocalized with HIF1A in kidney tumors.</text>
</comment>
<comment type="subcellular location">
    <molecule>Isoform 2</molecule>
    <subcellularLocation>
        <location evidence="11 12">Nucleus</location>
    </subcellularLocation>
    <subcellularLocation>
        <location evidence="11 12">Cytoplasm</location>
    </subcellularLocation>
    <subcellularLocation>
        <location evidence="11">Nucleus speckle</location>
    </subcellularLocation>
    <subcellularLocation>
        <location evidence="11">Mitochondrion</location>
    </subcellularLocation>
    <text evidence="11 12">Colocalizes with BAD in the cytoplasm (PubMed:21546903). Colocalizes with EPAS1 and HIF1A in the nucleus and speckles (PubMed:21546903). Shuttles between the nucleus and the cytoplasm in a CRM1-dependent manner (PubMed:24092767).</text>
</comment>
<comment type="alternative products">
    <event type="alternative splicing"/>
    <isoform>
        <id>Q0VBL6-1</id>
        <name>1</name>
        <sequence type="displayed"/>
    </isoform>
    <isoform>
        <id>Q0VBL6-2</id>
        <name>2</name>
        <sequence type="described" ref="VSP_024528 VSP_024529 VSP_024530 VSP_024531"/>
    </isoform>
    <isoform>
        <id>Q0VBL6-3</id>
        <name>3</name>
        <sequence type="described" ref="VSP_024528"/>
    </isoform>
</comment>
<comment type="tissue specificity">
    <text evidence="7 8 10 13">Isoform 3 is expressed in endothelial cells of vessels and capillaries in alveoli of the neonatal lung (at protein level) (PubMed:18070924). Expressed in lung, brain, heart and kidney (PubMed:9840812). Isoform 2 is expressed in heart and lung (PubMed:12119283). Isoform 2 is highly expressed in the epithelial cell layer of the cornea with lower expression in the layers of ganglion cells, inner nuclear cells, and rods and cones of the retina (PubMed:11734856). Isoform 2 is expressed in the cerebellum only in the Purkinje cell layer (PubMed:11734856).</text>
</comment>
<comment type="developmental stage">
    <text evidence="10">Isoform 3 is expressed in brain, heart, lung, liver and kidney at 15.5 dpc. Isoform 3 is expressed in heart, lung, liver and kidney at 18.5 dpc.</text>
</comment>
<comment type="induction">
    <text evidence="7 8 9 10">Isoform 2 is up-regulated in corneal epithelium cells under hypoxia (at protein level) (PubMed:11734856). Isoform 2 is up-regulated by hypoxia in a HIF1A-dependent manner (PubMed:12119283, PubMed:17355974). Isoform 3 is up-regulated by hypoxia (PubMed:18070924).</text>
</comment>
<comment type="domain">
    <molecule>Isoform 2</molecule>
    <text evidence="12">Contains a nuclear localization signal between amino acid positions 75 and 98. Contains a nuclear export signal between amino acid positions 228 and 272.</text>
</comment>
<comment type="PTM">
    <text evidence="3">In normoxia, hydroxylated on Pro-487 in the oxygen-dependent degradation domain (ODD) by PHD. The hydroxylated proline promotes interaction with VHL, initiating rapid ubiquitination and subsequent proteasomal degradation (By similarity).</text>
</comment>
<comment type="PTM">
    <text evidence="3">Ubiquitinated; ubiquitination occurs in a VHL- and oxygen-dependent pathway and subsequently targeted for proteasomal degradation.</text>
</comment>
<comment type="disruption phenotype">
    <text evidence="10">Mice appeared outwardly normal and are viable and fertile. Show hypertrophy of the right atrium and ventricle, disarrangement of striated muscle fibers in the heart, and pulmonary hyperplasia (PubMed:18070924).</text>
</comment>
<comment type="miscellaneous">
    <molecule>Isoform 2</molecule>
    <text evidence="12">Mutagenesis of Lys-75, Arg-76, Arg-97 and Arg-98 increase strongly cytoplasmic localization. Mutagenesis of Pro-228, Pro-229, Leu-271 and Leu-272 increase strongly nuclear localization.</text>
</comment>
<proteinExistence type="evidence at protein level"/>
<sequence>MDWDQDRSNTELRKEKSRDAARSRRSQETEVLYQLAHTLPFARGVSAHLDKASIMRLTISYLRMHRLCAAGEWNQVEKGGEPLDACYLKALEGFVMVLTAEGDMAYLSENVSKHLGLSQLELIGHSIFDFIHPCDQEELQDALTPRPNLSKKKLEAPTERHFSLRMKSTLTSRGRTLNLKAATWKVLHCSGHMRAYKPPAQTSPAGSPRSEPPLQCLVLICEAIPHPASLEPPLGRGAFLSRHSLDMKFTYCDERIAEVAGYSPDDLIGCSAYEYIHALDSDAVSRSIHTLLSKGQAVTGQYRFLARTGGYLWTQTQATVVSGGRGPQSESIICVHFLISRVEETGVVLSLEQTEQHTRRPPRLSASSQKGIPGNSVDSPAPRILAFLHPPALSEASLAADPRRFCSPDLRRLMAPILDGPPPAATPSTPQATRRPQSPLPADLPDKLTVGLENAHRLSTAQKNKTVETDLDIAQDPDTLDLEMLAPYISMDDDFQLNSSEQLPKVHRRPPRVARRPRARSFHGLSPPIPEPSLLPRWGSDPRLNCSSPSRGDRPTASLMPGTRKRALAQSSEDKGLELLETKPPKRSPRLEPGSFLLPPLSLSFLLQGRQLPGNQQDPRAPLVHSHEPLGLAPSLLSLCQHEETVQPRNRFPPAAGLGQTH</sequence>
<reference key="1">
    <citation type="journal article" date="1998" name="Gene Expr.">
        <title>Molecular characterization and chromosomal localization of a third alpha-class hypoxia inducible factor subunit, HIF3alpha.</title>
        <authorList>
            <person name="Gu Y.Z."/>
            <person name="Moran S.M."/>
            <person name="Hogenesch J.B."/>
            <person name="Wartman L."/>
            <person name="Bradfield C.A."/>
        </authorList>
    </citation>
    <scope>NUCLEOTIDE SEQUENCE [GENOMIC DNA / MRNA] (ISOFORM 1)</scope>
    <scope>FUNCTION (ISOFORM 1)</scope>
    <scope>TISSUE SPECIFICITY</scope>
    <scope>INTERACTION WITH ARNT (ISOFORM 1)</scope>
    <source>
        <tissue>Lung</tissue>
    </source>
</reference>
<reference key="2">
    <citation type="journal article" date="2001" name="Nature">
        <title>Inhibitory PAS domain protein is a negative regulator of hypoxia-inducible gene expression.</title>
        <authorList>
            <person name="Makino Y."/>
            <person name="Cao R."/>
            <person name="Svensson K."/>
            <person name="Bertilsson G."/>
            <person name="Asman M."/>
            <person name="Tanaka H."/>
            <person name="Cao Y."/>
            <person name="Berkenstam A."/>
            <person name="Poellinger L."/>
        </authorList>
    </citation>
    <scope>NUCLEOTIDE SEQUENCE [MRNA] (ISOFORM 2)</scope>
    <scope>FUNCTION (ISOFORM 2)</scope>
    <scope>TISSUE SPECIFICITY (ISOFORM 2)</scope>
    <scope>INTERACTION WITH HIF1A (ISOFORM 2)</scope>
    <scope>INDUCTION (ISOFORM 2)</scope>
    <source>
        <strain>C57BL/6J</strain>
    </source>
</reference>
<reference key="3">
    <citation type="journal article" date="2008" name="Mol. Cell. Biol.">
        <title>Abnormal heart development and lung remodeling in mice lacking the hypoxia-inducible factor-related basic helix-loop-helix PAS protein NEPAS.</title>
        <authorList>
            <person name="Yamashita T."/>
            <person name="Ohneda O."/>
            <person name="Nagano M."/>
            <person name="Iemitsu M."/>
            <person name="Makino Y."/>
            <person name="Tanaka H."/>
            <person name="Miyauchi T."/>
            <person name="Goto K."/>
            <person name="Ohneda K."/>
            <person name="Fujii-Kuriyama Y."/>
            <person name="Poellinger L."/>
            <person name="Yamamoto M."/>
        </authorList>
    </citation>
    <scope>NUCLEOTIDE SEQUENCE [MRNA] (ISOFORM 3)</scope>
    <scope>FUNCTION (ISOFORM 3)</scope>
    <scope>TISSUE SPECIFICITY (ISOFORM 3)</scope>
    <scope>DEVELOPMENTAL STAGE (ISOFORM 3)</scope>
    <scope>INDUCTION (ISOFORM 3)</scope>
    <scope>DISRUPTION PHENOTYPE</scope>
    <source>
        <tissue>Embryo</tissue>
    </source>
</reference>
<reference key="4">
    <citation type="journal article" date="2009" name="PLoS Biol.">
        <title>Lineage-specific biology revealed by a finished genome assembly of the mouse.</title>
        <authorList>
            <person name="Church D.M."/>
            <person name="Goodstadt L."/>
            <person name="Hillier L.W."/>
            <person name="Zody M.C."/>
            <person name="Goldstein S."/>
            <person name="She X."/>
            <person name="Bult C.J."/>
            <person name="Agarwala R."/>
            <person name="Cherry J.L."/>
            <person name="DiCuccio M."/>
            <person name="Hlavina W."/>
            <person name="Kapustin Y."/>
            <person name="Meric P."/>
            <person name="Maglott D."/>
            <person name="Birtle Z."/>
            <person name="Marques A.C."/>
            <person name="Graves T."/>
            <person name="Zhou S."/>
            <person name="Teague B."/>
            <person name="Potamousis K."/>
            <person name="Churas C."/>
            <person name="Place M."/>
            <person name="Herschleb J."/>
            <person name="Runnheim R."/>
            <person name="Forrest D."/>
            <person name="Amos-Landgraf J."/>
            <person name="Schwartz D.C."/>
            <person name="Cheng Z."/>
            <person name="Lindblad-Toh K."/>
            <person name="Eichler E.E."/>
            <person name="Ponting C.P."/>
        </authorList>
    </citation>
    <scope>NUCLEOTIDE SEQUENCE [LARGE SCALE GENOMIC DNA]</scope>
    <source>
        <strain>C57BL/6J</strain>
    </source>
</reference>
<reference key="5">
    <citation type="journal article" date="2004" name="Genome Res.">
        <title>The status, quality, and expansion of the NIH full-length cDNA project: the Mammalian Gene Collection (MGC).</title>
        <authorList>
            <consortium name="The MGC Project Team"/>
        </authorList>
    </citation>
    <scope>NUCLEOTIDE SEQUENCE [LARGE SCALE MRNA] (ISOFORM 1)</scope>
    <source>
        <tissue>Brain</tissue>
    </source>
</reference>
<reference key="6">
    <citation type="journal article" date="2005" name="Science">
        <title>The transcriptional landscape of the mammalian genome.</title>
        <authorList>
            <person name="Carninci P."/>
            <person name="Kasukawa T."/>
            <person name="Katayama S."/>
            <person name="Gough J."/>
            <person name="Frith M.C."/>
            <person name="Maeda N."/>
            <person name="Oyama R."/>
            <person name="Ravasi T."/>
            <person name="Lenhard B."/>
            <person name="Wells C."/>
            <person name="Kodzius R."/>
            <person name="Shimokawa K."/>
            <person name="Bajic V.B."/>
            <person name="Brenner S.E."/>
            <person name="Batalov S."/>
            <person name="Forrest A.R."/>
            <person name="Zavolan M."/>
            <person name="Davis M.J."/>
            <person name="Wilming L.G."/>
            <person name="Aidinis V."/>
            <person name="Allen J.E."/>
            <person name="Ambesi-Impiombato A."/>
            <person name="Apweiler R."/>
            <person name="Aturaliya R.N."/>
            <person name="Bailey T.L."/>
            <person name="Bansal M."/>
            <person name="Baxter L."/>
            <person name="Beisel K.W."/>
            <person name="Bersano T."/>
            <person name="Bono H."/>
            <person name="Chalk A.M."/>
            <person name="Chiu K.P."/>
            <person name="Choudhary V."/>
            <person name="Christoffels A."/>
            <person name="Clutterbuck D.R."/>
            <person name="Crowe M.L."/>
            <person name="Dalla E."/>
            <person name="Dalrymple B.P."/>
            <person name="de Bono B."/>
            <person name="Della Gatta G."/>
            <person name="di Bernardo D."/>
            <person name="Down T."/>
            <person name="Engstrom P."/>
            <person name="Fagiolini M."/>
            <person name="Faulkner G."/>
            <person name="Fletcher C.F."/>
            <person name="Fukushima T."/>
            <person name="Furuno M."/>
            <person name="Futaki S."/>
            <person name="Gariboldi M."/>
            <person name="Georgii-Hemming P."/>
            <person name="Gingeras T.R."/>
            <person name="Gojobori T."/>
            <person name="Green R.E."/>
            <person name="Gustincich S."/>
            <person name="Harbers M."/>
            <person name="Hayashi Y."/>
            <person name="Hensch T.K."/>
            <person name="Hirokawa N."/>
            <person name="Hill D."/>
            <person name="Huminiecki L."/>
            <person name="Iacono M."/>
            <person name="Ikeo K."/>
            <person name="Iwama A."/>
            <person name="Ishikawa T."/>
            <person name="Jakt M."/>
            <person name="Kanapin A."/>
            <person name="Katoh M."/>
            <person name="Kawasawa Y."/>
            <person name="Kelso J."/>
            <person name="Kitamura H."/>
            <person name="Kitano H."/>
            <person name="Kollias G."/>
            <person name="Krishnan S.P."/>
            <person name="Kruger A."/>
            <person name="Kummerfeld S.K."/>
            <person name="Kurochkin I.V."/>
            <person name="Lareau L.F."/>
            <person name="Lazarevic D."/>
            <person name="Lipovich L."/>
            <person name="Liu J."/>
            <person name="Liuni S."/>
            <person name="McWilliam S."/>
            <person name="Madan Babu M."/>
            <person name="Madera M."/>
            <person name="Marchionni L."/>
            <person name="Matsuda H."/>
            <person name="Matsuzawa S."/>
            <person name="Miki H."/>
            <person name="Mignone F."/>
            <person name="Miyake S."/>
            <person name="Morris K."/>
            <person name="Mottagui-Tabar S."/>
            <person name="Mulder N."/>
            <person name="Nakano N."/>
            <person name="Nakauchi H."/>
            <person name="Ng P."/>
            <person name="Nilsson R."/>
            <person name="Nishiguchi S."/>
            <person name="Nishikawa S."/>
            <person name="Nori F."/>
            <person name="Ohara O."/>
            <person name="Okazaki Y."/>
            <person name="Orlando V."/>
            <person name="Pang K.C."/>
            <person name="Pavan W.J."/>
            <person name="Pavesi G."/>
            <person name="Pesole G."/>
            <person name="Petrovsky N."/>
            <person name="Piazza S."/>
            <person name="Reed J."/>
            <person name="Reid J.F."/>
            <person name="Ring B.Z."/>
            <person name="Ringwald M."/>
            <person name="Rost B."/>
            <person name="Ruan Y."/>
            <person name="Salzberg S.L."/>
            <person name="Sandelin A."/>
            <person name="Schneider C."/>
            <person name="Schoenbach C."/>
            <person name="Sekiguchi K."/>
            <person name="Semple C.A."/>
            <person name="Seno S."/>
            <person name="Sessa L."/>
            <person name="Sheng Y."/>
            <person name="Shibata Y."/>
            <person name="Shimada H."/>
            <person name="Shimada K."/>
            <person name="Silva D."/>
            <person name="Sinclair B."/>
            <person name="Sperling S."/>
            <person name="Stupka E."/>
            <person name="Sugiura K."/>
            <person name="Sultana R."/>
            <person name="Takenaka Y."/>
            <person name="Taki K."/>
            <person name="Tammoja K."/>
            <person name="Tan S.L."/>
            <person name="Tang S."/>
            <person name="Taylor M.S."/>
            <person name="Tegner J."/>
            <person name="Teichmann S.A."/>
            <person name="Ueda H.R."/>
            <person name="van Nimwegen E."/>
            <person name="Verardo R."/>
            <person name="Wei C.L."/>
            <person name="Yagi K."/>
            <person name="Yamanishi H."/>
            <person name="Zabarovsky E."/>
            <person name="Zhu S."/>
            <person name="Zimmer A."/>
            <person name="Hide W."/>
            <person name="Bult C."/>
            <person name="Grimmond S.M."/>
            <person name="Teasdale R.D."/>
            <person name="Liu E.T."/>
            <person name="Brusic V."/>
            <person name="Quackenbush J."/>
            <person name="Wahlestedt C."/>
            <person name="Mattick J.S."/>
            <person name="Hume D.A."/>
            <person name="Kai C."/>
            <person name="Sasaki D."/>
            <person name="Tomaru Y."/>
            <person name="Fukuda S."/>
            <person name="Kanamori-Katayama M."/>
            <person name="Suzuki M."/>
            <person name="Aoki J."/>
            <person name="Arakawa T."/>
            <person name="Iida J."/>
            <person name="Imamura K."/>
            <person name="Itoh M."/>
            <person name="Kato T."/>
            <person name="Kawaji H."/>
            <person name="Kawagashira N."/>
            <person name="Kawashima T."/>
            <person name="Kojima M."/>
            <person name="Kondo S."/>
            <person name="Konno H."/>
            <person name="Nakano K."/>
            <person name="Ninomiya N."/>
            <person name="Nishio T."/>
            <person name="Okada M."/>
            <person name="Plessy C."/>
            <person name="Shibata K."/>
            <person name="Shiraki T."/>
            <person name="Suzuki S."/>
            <person name="Tagami M."/>
            <person name="Waki K."/>
            <person name="Watahiki A."/>
            <person name="Okamura-Oho Y."/>
            <person name="Suzuki H."/>
            <person name="Kawai J."/>
            <person name="Hayashizaki Y."/>
        </authorList>
    </citation>
    <scope>NUCLEOTIDE SEQUENCE [LARGE SCALE MRNA] OF 193-662 (ISOFORM 1)</scope>
    <source>
        <strain>C57BL/6J</strain>
        <tissue>Brain</tissue>
    </source>
</reference>
<reference key="7">
    <citation type="journal article" date="2002" name="J. Biol. Chem.">
        <title>Inhibitory PAS domain protein (IPAS) is a hypoxia-inducible splicing variant of the hypoxia-inducible factor-3alpha locus.</title>
        <authorList>
            <person name="Makino Y."/>
            <person name="Kanopka A."/>
            <person name="Wilson W.J."/>
            <person name="Tanaka H."/>
            <person name="Poellinger L."/>
        </authorList>
    </citation>
    <scope>TISSUE SPECIFICITY (ISOFORM 2)</scope>
    <scope>INDUCTION (ISOFORM 2)</scope>
</reference>
<reference key="8">
    <citation type="journal article" date="2007" name="J. Biol. Chem.">
        <title>Transcriptional up-regulation of inhibitory PAS domain protein gene expression by hypoxia-inducible factor 1 (HIF-1): a negative feedback regulatory circuit in HIF-1-mediated signaling in hypoxic cells.</title>
        <authorList>
            <person name="Makino Y."/>
            <person name="Uenishi R."/>
            <person name="Okamoto K."/>
            <person name="Isoe T."/>
            <person name="Hosono O."/>
            <person name="Tanaka H."/>
            <person name="Kanopka A."/>
            <person name="Poellinger L."/>
            <person name="Haneda M."/>
            <person name="Morimoto C."/>
        </authorList>
    </citation>
    <scope>INDUCTION (ISOFORM 2)</scope>
</reference>
<reference key="9">
    <citation type="journal article" date="2011" name="Cell Death Differ.">
        <title>Pro-apoptotic activity of inhibitory PAS domain protein (IPAS), a negative regulator of HIF-1, through binding to pro-survival Bcl-2 family proteins.</title>
        <authorList>
            <person name="Torii S."/>
            <person name="Goto Y."/>
            <person name="Ishizawa T."/>
            <person name="Hoshi H."/>
            <person name="Goryo K."/>
            <person name="Yasumoto K."/>
            <person name="Fukumura H."/>
            <person name="Sogawa K."/>
        </authorList>
    </citation>
    <scope>FUNCTION (ISOFORM 2)</scope>
    <scope>INTERACTION WITH BAD; BCL2L2; EPAS1; HIF1A AND MCL1 (ISOFORM 2)</scope>
    <scope>SUBCELLULAR LOCATION (ISOFORM 2)</scope>
</reference>
<reference key="10">
    <citation type="journal article" date="2013" name="J. Biochem.">
        <title>Nucleocytoplasmic shuttling of IPAS by its unique nuclear import and export signals unshared with other HIF-3alpha splice variants.</title>
        <authorList>
            <person name="Torii S."/>
            <person name="Sakaki K."/>
            <person name="Otomo M."/>
            <person name="Saka K."/>
            <person name="Yasumoto K."/>
            <person name="Sogawa K."/>
        </authorList>
    </citation>
    <scope>SUBCELLULAR LOCATION (ISOFORM 2)</scope>
    <scope>DOMAIN (ISOFORM 2)</scope>
    <scope>MUTAGENESIS (ISOFORM 2)</scope>
</reference>
<dbReference type="EMBL" id="AF060194">
    <property type="protein sequence ID" value="AAC72734.1"/>
    <property type="molecule type" value="mRNA"/>
</dbReference>
<dbReference type="EMBL" id="AH008971">
    <property type="protein sequence ID" value="AAF21782.1"/>
    <property type="molecule type" value="Genomic_DNA"/>
</dbReference>
<dbReference type="EMBL" id="AF416641">
    <property type="protein sequence ID" value="AAL39015.1"/>
    <property type="molecule type" value="mRNA"/>
</dbReference>
<dbReference type="EMBL" id="AB289606">
    <property type="protein sequence ID" value="BAF44519.1"/>
    <property type="molecule type" value="mRNA"/>
</dbReference>
<dbReference type="EMBL" id="AC148976">
    <property type="status" value="NOT_ANNOTATED_CDS"/>
    <property type="molecule type" value="Genomic_DNA"/>
</dbReference>
<dbReference type="EMBL" id="BC120587">
    <property type="protein sequence ID" value="AAI20588.1"/>
    <property type="molecule type" value="mRNA"/>
</dbReference>
<dbReference type="EMBL" id="AK144472">
    <property type="protein sequence ID" value="BAE25907.1"/>
    <property type="molecule type" value="mRNA"/>
</dbReference>
<dbReference type="CCDS" id="CCDS20860.1">
    <molecule id="Q0VBL6-1"/>
</dbReference>
<dbReference type="CCDS" id="CCDS52045.1">
    <molecule id="Q0VBL6-3"/>
</dbReference>
<dbReference type="RefSeq" id="NP_001156422.1">
    <molecule id="Q0VBL6-3"/>
    <property type="nucleotide sequence ID" value="NM_001162950.1"/>
</dbReference>
<dbReference type="RefSeq" id="NP_058564.2">
    <molecule id="Q0VBL6-1"/>
    <property type="nucleotide sequence ID" value="NM_016868.3"/>
</dbReference>
<dbReference type="PDB" id="7V7L">
    <property type="method" value="X-ray"/>
    <property type="resolution" value="2.30 A"/>
    <property type="chains" value="B=4-358"/>
</dbReference>
<dbReference type="PDB" id="7V7W">
    <property type="method" value="X-ray"/>
    <property type="resolution" value="2.51 A"/>
    <property type="chains" value="B=4-358"/>
</dbReference>
<dbReference type="PDBsum" id="7V7L"/>
<dbReference type="PDBsum" id="7V7W"/>
<dbReference type="SMR" id="Q0VBL6"/>
<dbReference type="BioGRID" id="207311">
    <property type="interactions" value="6"/>
</dbReference>
<dbReference type="FunCoup" id="Q0VBL6">
    <property type="interactions" value="874"/>
</dbReference>
<dbReference type="STRING" id="10090.ENSMUSP00000104132"/>
<dbReference type="GlyGen" id="Q0VBL6">
    <property type="glycosylation" value="1 site"/>
</dbReference>
<dbReference type="iPTMnet" id="Q0VBL6"/>
<dbReference type="PhosphoSitePlus" id="Q0VBL6"/>
<dbReference type="PaxDb" id="10090-ENSMUSP00000104132"/>
<dbReference type="Antibodypedia" id="18071">
    <property type="antibodies" value="384 antibodies from 30 providers"/>
</dbReference>
<dbReference type="DNASU" id="53417"/>
<dbReference type="Ensembl" id="ENSMUST00000037762.11">
    <molecule id="Q0VBL6-1"/>
    <property type="protein sequence ID" value="ENSMUSP00000048248.5"/>
    <property type="gene ID" value="ENSMUSG00000004328.16"/>
</dbReference>
<dbReference type="Ensembl" id="ENSMUST00000108492.9">
    <molecule id="Q0VBL6-3"/>
    <property type="protein sequence ID" value="ENSMUSP00000104132.3"/>
    <property type="gene ID" value="ENSMUSG00000004328.16"/>
</dbReference>
<dbReference type="GeneID" id="53417"/>
<dbReference type="KEGG" id="mmu:53417"/>
<dbReference type="UCSC" id="uc009fir.2">
    <molecule id="Q0VBL6-1"/>
    <property type="organism name" value="mouse"/>
</dbReference>
<dbReference type="UCSC" id="uc009fit.2">
    <molecule id="Q0VBL6-2"/>
    <property type="organism name" value="mouse"/>
</dbReference>
<dbReference type="AGR" id="MGI:1859778"/>
<dbReference type="CTD" id="64344"/>
<dbReference type="MGI" id="MGI:1859778">
    <property type="gene designation" value="Hif3a"/>
</dbReference>
<dbReference type="VEuPathDB" id="HostDB:ENSMUSG00000004328"/>
<dbReference type="eggNOG" id="KOG3558">
    <property type="taxonomic scope" value="Eukaryota"/>
</dbReference>
<dbReference type="GeneTree" id="ENSGT00940000161745"/>
<dbReference type="HOGENOM" id="CLU_010044_5_0_1"/>
<dbReference type="InParanoid" id="Q0VBL6"/>
<dbReference type="OMA" id="AEPRSHF"/>
<dbReference type="OrthoDB" id="78946at9989"/>
<dbReference type="Reactome" id="R-MMU-1234158">
    <property type="pathway name" value="Regulation of gene expression by Hypoxia-inducible Factor"/>
</dbReference>
<dbReference type="Reactome" id="R-MMU-1234176">
    <property type="pathway name" value="Oxygen-dependent proline hydroxylation of Hypoxia-inducible Factor Alpha"/>
</dbReference>
<dbReference type="Reactome" id="R-MMU-8951664">
    <property type="pathway name" value="Neddylation"/>
</dbReference>
<dbReference type="BioGRID-ORCS" id="53417">
    <property type="hits" value="1 hit in 78 CRISPR screens"/>
</dbReference>
<dbReference type="ChiTaRS" id="Hif3a">
    <property type="organism name" value="mouse"/>
</dbReference>
<dbReference type="PRO" id="PR:Q0VBL6"/>
<dbReference type="Proteomes" id="UP000000589">
    <property type="component" value="Chromosome 7"/>
</dbReference>
<dbReference type="RNAct" id="Q0VBL6">
    <property type="molecule type" value="protein"/>
</dbReference>
<dbReference type="Bgee" id="ENSMUSG00000004328">
    <property type="expression patterns" value="Expressed in fetal liver hematopoietic progenitor cell and 185 other cell types or tissues"/>
</dbReference>
<dbReference type="ExpressionAtlas" id="Q0VBL6">
    <property type="expression patterns" value="baseline and differential"/>
</dbReference>
<dbReference type="GO" id="GO:0000785">
    <property type="term" value="C:chromatin"/>
    <property type="evidence" value="ECO:0007669"/>
    <property type="project" value="Ensembl"/>
</dbReference>
<dbReference type="GO" id="GO:0005737">
    <property type="term" value="C:cytoplasm"/>
    <property type="evidence" value="ECO:0000314"/>
    <property type="project" value="UniProtKB"/>
</dbReference>
<dbReference type="GO" id="GO:0005829">
    <property type="term" value="C:cytosol"/>
    <property type="evidence" value="ECO:0007669"/>
    <property type="project" value="Ensembl"/>
</dbReference>
<dbReference type="GO" id="GO:0005739">
    <property type="term" value="C:mitochondrion"/>
    <property type="evidence" value="ECO:0000314"/>
    <property type="project" value="UniProtKB"/>
</dbReference>
<dbReference type="GO" id="GO:0016607">
    <property type="term" value="C:nuclear speck"/>
    <property type="evidence" value="ECO:0000314"/>
    <property type="project" value="UniProtKB"/>
</dbReference>
<dbReference type="GO" id="GO:0005634">
    <property type="term" value="C:nucleus"/>
    <property type="evidence" value="ECO:0000314"/>
    <property type="project" value="UniProtKB"/>
</dbReference>
<dbReference type="GO" id="GO:0005886">
    <property type="term" value="C:plasma membrane"/>
    <property type="evidence" value="ECO:0007669"/>
    <property type="project" value="Ensembl"/>
</dbReference>
<dbReference type="GO" id="GO:0003677">
    <property type="term" value="F:DNA binding"/>
    <property type="evidence" value="ECO:0000353"/>
    <property type="project" value="MGI"/>
</dbReference>
<dbReference type="GO" id="GO:0003700">
    <property type="term" value="F:DNA-binding transcription factor activity"/>
    <property type="evidence" value="ECO:0000353"/>
    <property type="project" value="MGI"/>
</dbReference>
<dbReference type="GO" id="GO:0000981">
    <property type="term" value="F:DNA-binding transcription factor activity, RNA polymerase II-specific"/>
    <property type="evidence" value="ECO:0000250"/>
    <property type="project" value="UniProtKB"/>
</dbReference>
<dbReference type="GO" id="GO:0046983">
    <property type="term" value="F:protein dimerization activity"/>
    <property type="evidence" value="ECO:0007669"/>
    <property type="project" value="InterPro"/>
</dbReference>
<dbReference type="GO" id="GO:0000978">
    <property type="term" value="F:RNA polymerase II cis-regulatory region sequence-specific DNA binding"/>
    <property type="evidence" value="ECO:0007669"/>
    <property type="project" value="Ensembl"/>
</dbReference>
<dbReference type="GO" id="GO:0001525">
    <property type="term" value="P:angiogenesis"/>
    <property type="evidence" value="ECO:0007669"/>
    <property type="project" value="UniProtKB-KW"/>
</dbReference>
<dbReference type="GO" id="GO:0006915">
    <property type="term" value="P:apoptotic process"/>
    <property type="evidence" value="ECO:0007669"/>
    <property type="project" value="UniProtKB-KW"/>
</dbReference>
<dbReference type="GO" id="GO:0001666">
    <property type="term" value="P:response to hypoxia"/>
    <property type="evidence" value="ECO:0000314"/>
    <property type="project" value="MGI"/>
</dbReference>
<dbReference type="GO" id="GO:0006366">
    <property type="term" value="P:transcription by RNA polymerase II"/>
    <property type="evidence" value="ECO:0000353"/>
    <property type="project" value="MGI"/>
</dbReference>
<dbReference type="CDD" id="cd19729">
    <property type="entry name" value="bHLH-PAS_HIF3a_PASD7"/>
    <property type="match status" value="1"/>
</dbReference>
<dbReference type="CDD" id="cd00130">
    <property type="entry name" value="PAS"/>
    <property type="match status" value="2"/>
</dbReference>
<dbReference type="FunFam" id="3.30.450.20:FF:000005">
    <property type="entry name" value="Hypoxia-inducible factor 1 subunit alpha"/>
    <property type="match status" value="1"/>
</dbReference>
<dbReference type="FunFam" id="3.30.450.20:FF:000042">
    <property type="entry name" value="hypoxia-inducible factor 3-alpha isoform X1"/>
    <property type="match status" value="1"/>
</dbReference>
<dbReference type="FunFam" id="4.10.280.10:FF:000076">
    <property type="entry name" value="hypoxia-inducible factor 3-alpha isoform X1"/>
    <property type="match status" value="1"/>
</dbReference>
<dbReference type="Gene3D" id="4.10.280.10">
    <property type="entry name" value="Helix-loop-helix DNA-binding domain"/>
    <property type="match status" value="1"/>
</dbReference>
<dbReference type="Gene3D" id="3.30.450.20">
    <property type="entry name" value="PAS domain"/>
    <property type="match status" value="2"/>
</dbReference>
<dbReference type="InterPro" id="IPR011598">
    <property type="entry name" value="bHLH_dom"/>
</dbReference>
<dbReference type="InterPro" id="IPR021537">
    <property type="entry name" value="HIF_alpha-like"/>
</dbReference>
<dbReference type="InterPro" id="IPR036638">
    <property type="entry name" value="HLH_DNA-bd_sf"/>
</dbReference>
<dbReference type="InterPro" id="IPR000014">
    <property type="entry name" value="PAS"/>
</dbReference>
<dbReference type="InterPro" id="IPR035965">
    <property type="entry name" value="PAS-like_dom_sf"/>
</dbReference>
<dbReference type="InterPro" id="IPR013767">
    <property type="entry name" value="PAS_fold"/>
</dbReference>
<dbReference type="NCBIfam" id="TIGR00229">
    <property type="entry name" value="sensory_box"/>
    <property type="match status" value="1"/>
</dbReference>
<dbReference type="PANTHER" id="PTHR23043">
    <property type="entry name" value="HYPOXIA-INDUCIBLE FACTOR 1 ALPHA"/>
    <property type="match status" value="1"/>
</dbReference>
<dbReference type="PANTHER" id="PTHR23043:SF18">
    <property type="entry name" value="HYPOXIA-INDUCIBLE FACTOR 3-ALPHA"/>
    <property type="match status" value="1"/>
</dbReference>
<dbReference type="Pfam" id="PF23171">
    <property type="entry name" value="bHLH_HIF1A"/>
    <property type="match status" value="1"/>
</dbReference>
<dbReference type="Pfam" id="PF11413">
    <property type="entry name" value="HIF-1"/>
    <property type="match status" value="1"/>
</dbReference>
<dbReference type="Pfam" id="PF00989">
    <property type="entry name" value="PAS"/>
    <property type="match status" value="1"/>
</dbReference>
<dbReference type="Pfam" id="PF14598">
    <property type="entry name" value="PAS_11"/>
    <property type="match status" value="1"/>
</dbReference>
<dbReference type="SMART" id="SM00353">
    <property type="entry name" value="HLH"/>
    <property type="match status" value="1"/>
</dbReference>
<dbReference type="SMART" id="SM00091">
    <property type="entry name" value="PAS"/>
    <property type="match status" value="2"/>
</dbReference>
<dbReference type="SUPFAM" id="SSF47459">
    <property type="entry name" value="HLH, helix-loop-helix DNA-binding domain"/>
    <property type="match status" value="1"/>
</dbReference>
<dbReference type="SUPFAM" id="SSF55785">
    <property type="entry name" value="PYP-like sensor domain (PAS domain)"/>
    <property type="match status" value="2"/>
</dbReference>
<dbReference type="PROSITE" id="PS50888">
    <property type="entry name" value="BHLH"/>
    <property type="match status" value="1"/>
</dbReference>
<dbReference type="PROSITE" id="PS50112">
    <property type="entry name" value="PAS"/>
    <property type="match status" value="2"/>
</dbReference>
<gene>
    <name evidence="19" type="primary">Hif3a</name>
    <name evidence="17" type="synonym">Mop7</name>
    <name evidence="16" type="synonym">Nepas</name>
</gene>
<accession>Q0VBL6</accession>
<accession>A1IM61</accession>
<accession>E9QLB1</accession>
<accession>Q3UN40</accession>
<accession>Q8VHR1</accession>
<accession>Q9QX54</accession>
<accession>Q9Z2I5</accession>
<name>HIF3A_MOUSE</name>
<keyword id="KW-0002">3D-structure</keyword>
<keyword id="KW-0025">Alternative splicing</keyword>
<keyword id="KW-0037">Angiogenesis</keyword>
<keyword id="KW-0053">Apoptosis</keyword>
<keyword id="KW-0963">Cytoplasm</keyword>
<keyword id="KW-0217">Developmental protein</keyword>
<keyword id="KW-0379">Hydroxylation</keyword>
<keyword id="KW-1017">Isopeptide bond</keyword>
<keyword id="KW-0496">Mitochondrion</keyword>
<keyword id="KW-0539">Nucleus</keyword>
<keyword id="KW-1185">Reference proteome</keyword>
<keyword id="KW-0677">Repeat</keyword>
<keyword id="KW-0678">Repressor</keyword>
<keyword id="KW-0346">Stress response</keyword>
<keyword id="KW-0804">Transcription</keyword>
<keyword id="KW-0805">Transcription regulation</keyword>
<keyword id="KW-0043">Tumor suppressor</keyword>
<keyword id="KW-0832">Ubl conjugation</keyword>
<feature type="chain" id="PRO_0000284415" description="Hypoxia-inducible factor 3-alpha">
    <location>
        <begin position="1"/>
        <end position="662"/>
    </location>
</feature>
<feature type="domain" description="bHLH" evidence="5">
    <location>
        <begin position="12"/>
        <end position="65"/>
    </location>
</feature>
<feature type="domain" description="PAS 1" evidence="4">
    <location>
        <begin position="80"/>
        <end position="150"/>
    </location>
</feature>
<feature type="domain" description="PAS 2" evidence="4">
    <location>
        <begin position="225"/>
        <end position="295"/>
    </location>
</feature>
<feature type="region of interest" description="Disordered" evidence="6">
    <location>
        <begin position="1"/>
        <end position="25"/>
    </location>
</feature>
<feature type="region of interest" description="Nuclear localization signal (isoform 2)" evidence="12">
    <location>
        <begin position="75"/>
        <end position="98"/>
    </location>
</feature>
<feature type="region of interest" description="Nuclear export signal (isoform 2)" evidence="12">
    <location>
        <begin position="228"/>
        <end position="272"/>
    </location>
</feature>
<feature type="region of interest" description="Disordered" evidence="6">
    <location>
        <begin position="352"/>
        <end position="377"/>
    </location>
</feature>
<feature type="region of interest" description="Disordered" evidence="6">
    <location>
        <begin position="416"/>
        <end position="446"/>
    </location>
</feature>
<feature type="region of interest" description="ODD">
    <location>
        <begin position="448"/>
        <end position="581"/>
    </location>
</feature>
<feature type="region of interest" description="NTAD">
    <location>
        <begin position="450"/>
        <end position="501"/>
    </location>
</feature>
<feature type="region of interest" description="Disordered" evidence="6">
    <location>
        <begin position="500"/>
        <end position="595"/>
    </location>
</feature>
<feature type="short sequence motif" description="LRRLL">
    <location>
        <begin position="414"/>
        <end position="418"/>
    </location>
</feature>
<feature type="short sequence motif" description="LAPYISMD">
    <location>
        <begin position="485"/>
        <end position="492"/>
    </location>
</feature>
<feature type="compositionally biased region" description="Low complexity" evidence="6">
    <location>
        <begin position="426"/>
        <end position="437"/>
    </location>
</feature>
<feature type="compositionally biased region" description="Basic residues" evidence="6">
    <location>
        <begin position="505"/>
        <end position="521"/>
    </location>
</feature>
<feature type="compositionally biased region" description="Basic and acidic residues" evidence="6">
    <location>
        <begin position="572"/>
        <end position="584"/>
    </location>
</feature>
<feature type="modified residue" description="4-hydroxyproline" evidence="1">
    <location>
        <position position="487"/>
    </location>
</feature>
<feature type="cross-link" description="Glycyl lysine isopeptide (Lys-Gly) (interchain with G-Cter in ubiquitin)" evidence="3">
    <location>
        <position position="463"/>
    </location>
</feature>
<feature type="cross-link" description="Glycyl lysine isopeptide (Lys-Gly) (interchain with G-Cter in ubiquitin)" evidence="3">
    <location>
        <position position="565"/>
    </location>
</feature>
<feature type="splice variant" id="VSP_024528" description="In isoform 2 and isoform 3." evidence="14 16">
    <original>MDWDQD</original>
    <variation>MALGLQRV</variation>
    <location>
        <begin position="1"/>
        <end position="6"/>
    </location>
</feature>
<feature type="splice variant" id="VSP_024529" description="In isoform 2." evidence="14">
    <original>EWNQVEKGGEPLDACYLKALEGFVMVLTAEGDMAYLSENVSKHLGLSQ</original>
    <variation>GKRGRATGRLLPEGPGGFRHGTHRRGRHGLPVGKCQQAPGPQSVDLCSSSLIHNPTPGTNFS</variation>
    <location>
        <begin position="72"/>
        <end position="119"/>
    </location>
</feature>
<feature type="splice variant" id="VSP_024530" description="In isoform 2." evidence="14">
    <original>HPASLEPPLGRGAFLSRHSLDMKFTYCDERIAEVAGYSPDDLIGCSAYEYIHALDSDAVSRSIHTL</original>
    <variation>QLPFHDGATLGLPQEKTPISTLFTPLWKALLCLVKRWPVQVLQGKGTESSLPSWVLWALNRKNCPG</variation>
    <location>
        <begin position="226"/>
        <end position="291"/>
    </location>
</feature>
<feature type="splice variant" id="VSP_024531" description="In isoform 2." evidence="14">
    <location>
        <begin position="292"/>
        <end position="662"/>
    </location>
</feature>
<feature type="sequence conflict" description="In Ref. 6; BAE25907." evidence="18" ref="6">
    <original>T</original>
    <variation>N</variation>
    <location>
        <position position="345"/>
    </location>
</feature>
<feature type="sequence conflict" description="In Ref. 1; AAC72734/AAF21782, 5; AAI20588 and 3; BAF44519." evidence="18" ref="1 5 3">
    <original>T</original>
    <variation>A</variation>
    <location>
        <position position="449"/>
    </location>
</feature>
<feature type="sequence conflict" description="In Ref. 1; AAC72734/AAF21782, 5; AAI20588 and 3; BAF44519." evidence="18" ref="1 5 3">
    <original>P</original>
    <variation>S</variation>
    <location>
        <position position="477"/>
    </location>
</feature>
<feature type="sequence conflict" description="In Ref. 6; BAE25907." evidence="18" ref="6">
    <original>M</original>
    <variation>I</variation>
    <location>
        <position position="484"/>
    </location>
</feature>
<feature type="sequence conflict" description="In Ref. 1; AAC72734/AAF21782." evidence="18" ref="1">
    <original>T</original>
    <variation>I</variation>
    <location>
        <position position="582"/>
    </location>
</feature>
<feature type="sequence conflict" description="In Ref. 1; AAC72734/AAF21782, 5; AAI20588 and 3; BAF44519." evidence="18" ref="1 5 3">
    <original>P</original>
    <variation>L</variation>
    <location>
        <position position="613"/>
    </location>
</feature>
<feature type="sequence conflict" description="In Ref. 1; AAC72734 and 3; BAF44519." evidence="18" ref="1 3">
    <original>R</original>
    <variation>H</variation>
    <location>
        <position position="651"/>
    </location>
</feature>
<feature type="helix" evidence="20">
    <location>
        <begin position="20"/>
        <end position="37"/>
    </location>
</feature>
<feature type="strand" evidence="20">
    <location>
        <begin position="39"/>
        <end position="41"/>
    </location>
</feature>
<feature type="helix" evidence="20">
    <location>
        <begin position="45"/>
        <end position="48"/>
    </location>
</feature>
<feature type="helix" evidence="20">
    <location>
        <begin position="51"/>
        <end position="69"/>
    </location>
</feature>
<feature type="turn" evidence="20">
    <location>
        <begin position="82"/>
        <end position="85"/>
    </location>
</feature>
<feature type="helix" evidence="20">
    <location>
        <begin position="86"/>
        <end position="90"/>
    </location>
</feature>
<feature type="strand" evidence="20">
    <location>
        <begin position="92"/>
        <end position="98"/>
    </location>
</feature>
<feature type="strand" evidence="20">
    <location>
        <begin position="103"/>
        <end position="107"/>
    </location>
</feature>
<feature type="helix" evidence="20">
    <location>
        <begin position="111"/>
        <end position="115"/>
    </location>
</feature>
<feature type="helix" evidence="20">
    <location>
        <begin position="119"/>
        <end position="122"/>
    </location>
</feature>
<feature type="helix" evidence="20">
    <location>
        <begin position="127"/>
        <end position="129"/>
    </location>
</feature>
<feature type="helix" evidence="20">
    <location>
        <begin position="133"/>
        <end position="135"/>
    </location>
</feature>
<feature type="helix" evidence="20">
    <location>
        <begin position="136"/>
        <end position="142"/>
    </location>
</feature>
<feature type="strand" evidence="20">
    <location>
        <begin position="159"/>
        <end position="168"/>
    </location>
</feature>
<feature type="helix" evidence="20">
    <location>
        <begin position="179"/>
        <end position="181"/>
    </location>
</feature>
<feature type="strand" evidence="20">
    <location>
        <begin position="183"/>
        <end position="194"/>
    </location>
</feature>
<feature type="strand" evidence="20">
    <location>
        <begin position="216"/>
        <end position="223"/>
    </location>
</feature>
<feature type="strand" evidence="20">
    <location>
        <begin position="236"/>
        <end position="243"/>
    </location>
</feature>
<feature type="strand" evidence="20">
    <location>
        <begin position="248"/>
        <end position="252"/>
    </location>
</feature>
<feature type="helix" evidence="20">
    <location>
        <begin position="256"/>
        <end position="260"/>
    </location>
</feature>
<feature type="helix" evidence="20">
    <location>
        <begin position="264"/>
        <end position="267"/>
    </location>
</feature>
<feature type="helix" evidence="20">
    <location>
        <begin position="272"/>
        <end position="275"/>
    </location>
</feature>
<feature type="helix" evidence="20">
    <location>
        <begin position="278"/>
        <end position="280"/>
    </location>
</feature>
<feature type="helix" evidence="20">
    <location>
        <begin position="281"/>
        <end position="294"/>
    </location>
</feature>
<feature type="strand" evidence="20">
    <location>
        <begin position="295"/>
        <end position="298"/>
    </location>
</feature>
<feature type="strand" evidence="20">
    <location>
        <begin position="302"/>
        <end position="305"/>
    </location>
</feature>
<feature type="strand" evidence="20">
    <location>
        <begin position="307"/>
        <end position="309"/>
    </location>
</feature>
<feature type="strand" evidence="20">
    <location>
        <begin position="311"/>
        <end position="321"/>
    </location>
</feature>
<feature type="strand" evidence="20">
    <location>
        <begin position="331"/>
        <end position="338"/>
    </location>
</feature>
<feature type="helix" evidence="20">
    <location>
        <begin position="351"/>
        <end position="357"/>
    </location>
</feature>
<protein>
    <recommendedName>
        <fullName evidence="17">Hypoxia-inducible factor 3-alpha</fullName>
        <shortName>HIF-3-alpha</shortName>
        <shortName>HIF3-alpha</shortName>
    </recommendedName>
    <alternativeName>
        <fullName>Basic-helix-loop-helix-PAS protein MOP7</fullName>
    </alternativeName>
    <alternativeName>
        <fullName>HIF3-alpha-1</fullName>
    </alternativeName>
    <alternativeName>
        <fullName evidence="15">Inhibitory PAS domain protein</fullName>
        <shortName evidence="15">IPAS</shortName>
    </alternativeName>
    <alternativeName>
        <fullName>Member of PAS protein 7</fullName>
    </alternativeName>
    <alternativeName>
        <fullName evidence="16">Neonatal and embryonic PAS protein</fullName>
    </alternativeName>
</protein>
<evidence type="ECO:0000250" key="1"/>
<evidence type="ECO:0000250" key="2">
    <source>
        <dbReference type="UniProtKB" id="Q9JHS2"/>
    </source>
</evidence>
<evidence type="ECO:0000250" key="3">
    <source>
        <dbReference type="UniProtKB" id="Q9Y2N7"/>
    </source>
</evidence>
<evidence type="ECO:0000255" key="4">
    <source>
        <dbReference type="PROSITE-ProRule" id="PRU00140"/>
    </source>
</evidence>
<evidence type="ECO:0000255" key="5">
    <source>
        <dbReference type="PROSITE-ProRule" id="PRU00981"/>
    </source>
</evidence>
<evidence type="ECO:0000256" key="6">
    <source>
        <dbReference type="SAM" id="MobiDB-lite"/>
    </source>
</evidence>
<evidence type="ECO:0000269" key="7">
    <source>
    </source>
</evidence>
<evidence type="ECO:0000269" key="8">
    <source>
    </source>
</evidence>
<evidence type="ECO:0000269" key="9">
    <source>
    </source>
</evidence>
<evidence type="ECO:0000269" key="10">
    <source>
    </source>
</evidence>
<evidence type="ECO:0000269" key="11">
    <source>
    </source>
</evidence>
<evidence type="ECO:0000269" key="12">
    <source>
    </source>
</evidence>
<evidence type="ECO:0000269" key="13">
    <source>
    </source>
</evidence>
<evidence type="ECO:0000303" key="14">
    <source>
    </source>
</evidence>
<evidence type="ECO:0000303" key="15">
    <source>
    </source>
</evidence>
<evidence type="ECO:0000303" key="16">
    <source>
    </source>
</evidence>
<evidence type="ECO:0000303" key="17">
    <source>
    </source>
</evidence>
<evidence type="ECO:0000305" key="18"/>
<evidence type="ECO:0000312" key="19">
    <source>
        <dbReference type="MGI" id="MGI:1859778"/>
    </source>
</evidence>
<evidence type="ECO:0007829" key="20">
    <source>
        <dbReference type="PDB" id="7V7L"/>
    </source>
</evidence>
<organism>
    <name type="scientific">Mus musculus</name>
    <name type="common">Mouse</name>
    <dbReference type="NCBI Taxonomy" id="10090"/>
    <lineage>
        <taxon>Eukaryota</taxon>
        <taxon>Metazoa</taxon>
        <taxon>Chordata</taxon>
        <taxon>Craniata</taxon>
        <taxon>Vertebrata</taxon>
        <taxon>Euteleostomi</taxon>
        <taxon>Mammalia</taxon>
        <taxon>Eutheria</taxon>
        <taxon>Euarchontoglires</taxon>
        <taxon>Glires</taxon>
        <taxon>Rodentia</taxon>
        <taxon>Myomorpha</taxon>
        <taxon>Muroidea</taxon>
        <taxon>Muridae</taxon>
        <taxon>Murinae</taxon>
        <taxon>Mus</taxon>
        <taxon>Mus</taxon>
    </lineage>
</organism>